<dbReference type="EMBL" id="CH963852">
    <property type="protein sequence ID" value="EDW75643.1"/>
    <property type="molecule type" value="Genomic_DNA"/>
</dbReference>
<dbReference type="SMR" id="B4MU54"/>
<dbReference type="STRING" id="7260.B4MU54"/>
<dbReference type="EnsemblMetazoa" id="FBtr0254632">
    <property type="protein sequence ID" value="FBpp0253124"/>
    <property type="gene ID" value="FBgn0225943"/>
</dbReference>
<dbReference type="EnsemblMetazoa" id="XM_002064621.4">
    <property type="protein sequence ID" value="XP_002064657.1"/>
    <property type="gene ID" value="LOC6641752"/>
</dbReference>
<dbReference type="GeneID" id="6641752"/>
<dbReference type="KEGG" id="dwi:6641752"/>
<dbReference type="eggNOG" id="KOG0313">
    <property type="taxonomic scope" value="Eukaryota"/>
</dbReference>
<dbReference type="HOGENOM" id="CLU_000288_57_0_1"/>
<dbReference type="OMA" id="DHKYVEF"/>
<dbReference type="OrthoDB" id="10251381at2759"/>
<dbReference type="PhylomeDB" id="B4MU54"/>
<dbReference type="Proteomes" id="UP000007798">
    <property type="component" value="Unassembled WGS sequence"/>
</dbReference>
<dbReference type="GO" id="GO:0005654">
    <property type="term" value="C:nucleoplasm"/>
    <property type="evidence" value="ECO:0007669"/>
    <property type="project" value="UniProtKB-SubCell"/>
</dbReference>
<dbReference type="GO" id="GO:0070545">
    <property type="term" value="C:PeBoW complex"/>
    <property type="evidence" value="ECO:0000250"/>
    <property type="project" value="UniProtKB"/>
</dbReference>
<dbReference type="GO" id="GO:0030687">
    <property type="term" value="C:preribosome, large subunit precursor"/>
    <property type="evidence" value="ECO:0007669"/>
    <property type="project" value="UniProtKB-UniRule"/>
</dbReference>
<dbReference type="GO" id="GO:0043021">
    <property type="term" value="F:ribonucleoprotein complex binding"/>
    <property type="evidence" value="ECO:0007669"/>
    <property type="project" value="UniProtKB-UniRule"/>
</dbReference>
<dbReference type="GO" id="GO:0000466">
    <property type="term" value="P:maturation of 5.8S rRNA from tricistronic rRNA transcript (SSU-rRNA, 5.8S rRNA, LSU-rRNA)"/>
    <property type="evidence" value="ECO:0007669"/>
    <property type="project" value="UniProtKB-UniRule"/>
</dbReference>
<dbReference type="GO" id="GO:0000463">
    <property type="term" value="P:maturation of LSU-rRNA from tricistronic rRNA transcript (SSU-rRNA, 5.8S rRNA, LSU-rRNA)"/>
    <property type="evidence" value="ECO:0000250"/>
    <property type="project" value="UniProtKB"/>
</dbReference>
<dbReference type="CDD" id="cd00200">
    <property type="entry name" value="WD40"/>
    <property type="match status" value="1"/>
</dbReference>
<dbReference type="FunFam" id="2.130.10.10:FF:000989">
    <property type="entry name" value="Ribosome biogenesis protein WDR12 homolog"/>
    <property type="match status" value="1"/>
</dbReference>
<dbReference type="Gene3D" id="2.130.10.10">
    <property type="entry name" value="YVTN repeat-like/Quinoprotein amine dehydrogenase"/>
    <property type="match status" value="3"/>
</dbReference>
<dbReference type="HAMAP" id="MF_03029">
    <property type="entry name" value="WDR12"/>
    <property type="match status" value="1"/>
</dbReference>
<dbReference type="InterPro" id="IPR020472">
    <property type="entry name" value="G-protein_beta_WD-40_rep"/>
</dbReference>
<dbReference type="InterPro" id="IPR012972">
    <property type="entry name" value="NLE"/>
</dbReference>
<dbReference type="InterPro" id="IPR015943">
    <property type="entry name" value="WD40/YVTN_repeat-like_dom_sf"/>
</dbReference>
<dbReference type="InterPro" id="IPR019775">
    <property type="entry name" value="WD40_repeat_CS"/>
</dbReference>
<dbReference type="InterPro" id="IPR036322">
    <property type="entry name" value="WD40_repeat_dom_sf"/>
</dbReference>
<dbReference type="InterPro" id="IPR001680">
    <property type="entry name" value="WD40_rpt"/>
</dbReference>
<dbReference type="InterPro" id="IPR028599">
    <property type="entry name" value="WDR12/Ytm1"/>
</dbReference>
<dbReference type="PANTHER" id="PTHR19855:SF11">
    <property type="entry name" value="RIBOSOME BIOGENESIS PROTEIN WDR12"/>
    <property type="match status" value="1"/>
</dbReference>
<dbReference type="PANTHER" id="PTHR19855">
    <property type="entry name" value="WD40 REPEAT PROTEIN 12, 37"/>
    <property type="match status" value="1"/>
</dbReference>
<dbReference type="Pfam" id="PF08154">
    <property type="entry name" value="NLE"/>
    <property type="match status" value="1"/>
</dbReference>
<dbReference type="Pfam" id="PF00400">
    <property type="entry name" value="WD40"/>
    <property type="match status" value="7"/>
</dbReference>
<dbReference type="PRINTS" id="PR00320">
    <property type="entry name" value="GPROTEINBRPT"/>
</dbReference>
<dbReference type="SMART" id="SM00320">
    <property type="entry name" value="WD40"/>
    <property type="match status" value="7"/>
</dbReference>
<dbReference type="SUPFAM" id="SSF50978">
    <property type="entry name" value="WD40 repeat-like"/>
    <property type="match status" value="1"/>
</dbReference>
<dbReference type="PROSITE" id="PS00678">
    <property type="entry name" value="WD_REPEATS_1"/>
    <property type="match status" value="1"/>
</dbReference>
<dbReference type="PROSITE" id="PS50082">
    <property type="entry name" value="WD_REPEATS_2"/>
    <property type="match status" value="3"/>
</dbReference>
<dbReference type="PROSITE" id="PS50294">
    <property type="entry name" value="WD_REPEATS_REGION"/>
    <property type="match status" value="1"/>
</dbReference>
<keyword id="KW-0539">Nucleus</keyword>
<keyword id="KW-1185">Reference proteome</keyword>
<keyword id="KW-0677">Repeat</keyword>
<keyword id="KW-0690">Ribosome biogenesis</keyword>
<keyword id="KW-0698">rRNA processing</keyword>
<keyword id="KW-0853">WD repeat</keyword>
<organism>
    <name type="scientific">Drosophila willistoni</name>
    <name type="common">Fruit fly</name>
    <dbReference type="NCBI Taxonomy" id="7260"/>
    <lineage>
        <taxon>Eukaryota</taxon>
        <taxon>Metazoa</taxon>
        <taxon>Ecdysozoa</taxon>
        <taxon>Arthropoda</taxon>
        <taxon>Hexapoda</taxon>
        <taxon>Insecta</taxon>
        <taxon>Pterygota</taxon>
        <taxon>Neoptera</taxon>
        <taxon>Endopterygota</taxon>
        <taxon>Diptera</taxon>
        <taxon>Brachycera</taxon>
        <taxon>Muscomorpha</taxon>
        <taxon>Ephydroidea</taxon>
        <taxon>Drosophilidae</taxon>
        <taxon>Drosophila</taxon>
        <taxon>Sophophora</taxon>
    </lineage>
</organism>
<reference key="1">
    <citation type="journal article" date="2007" name="Nature">
        <title>Evolution of genes and genomes on the Drosophila phylogeny.</title>
        <authorList>
            <consortium name="Drosophila 12 genomes consortium"/>
        </authorList>
    </citation>
    <scope>NUCLEOTIDE SEQUENCE [LARGE SCALE GENOMIC DNA]</scope>
    <source>
        <strain>Tucson 14030-0811.24</strain>
    </source>
</reference>
<gene>
    <name type="ORF">GK23981</name>
</gene>
<name>WDR12_DROWI</name>
<protein>
    <recommendedName>
        <fullName evidence="1">Ribosome biogenesis protein WDR12 homolog</fullName>
    </recommendedName>
</protein>
<comment type="function">
    <text evidence="1">Required for maturation of ribosomal RNAs and formation of the large ribosomal subunit.</text>
</comment>
<comment type="subcellular location">
    <subcellularLocation>
        <location evidence="1">Nucleus</location>
        <location evidence="1">Nucleolus</location>
    </subcellularLocation>
    <subcellularLocation>
        <location evidence="1">Nucleus</location>
        <location evidence="1">Nucleoplasm</location>
    </subcellularLocation>
</comment>
<comment type="similarity">
    <text evidence="1">Belongs to the WD repeat WDR12/YTM1 family.</text>
</comment>
<feature type="chain" id="PRO_0000369565" description="Ribosome biogenesis protein WDR12 homolog">
    <location>
        <begin position="1"/>
        <end position="423"/>
    </location>
</feature>
<feature type="repeat" description="WD 1">
    <location>
        <begin position="105"/>
        <end position="142"/>
    </location>
</feature>
<feature type="repeat" description="WD 2">
    <location>
        <begin position="144"/>
        <end position="186"/>
    </location>
</feature>
<feature type="repeat" description="WD 3">
    <location>
        <begin position="193"/>
        <end position="232"/>
    </location>
</feature>
<feature type="repeat" description="WD 4">
    <location>
        <begin position="253"/>
        <end position="291"/>
    </location>
</feature>
<feature type="repeat" description="WD 5">
    <location>
        <begin position="293"/>
        <end position="332"/>
    </location>
</feature>
<feature type="repeat" description="WD 6">
    <location>
        <begin position="338"/>
        <end position="378"/>
    </location>
</feature>
<feature type="repeat" description="WD 7">
    <location>
        <begin position="382"/>
        <end position="420"/>
    </location>
</feature>
<feature type="region of interest" description="Ubiquitin-like (UBL) domain" evidence="1">
    <location>
        <begin position="10"/>
        <end position="93"/>
    </location>
</feature>
<sequence>MDAENGEGQVQVHLKTKQEHYAVPDVPYAIDGTMTTVELNTFLNALLRNKSGDESAIDFDFLVFDEYLRGRLCDHLKEKAISFEDAIEIEYVERFPAPQPQDCLLHDDWVSAVKVSGKWILTGCYDNTLNIWTHKGKHILTIPGHTAPIKAVDWISLDNDIGRFVSSSQDQTVMLWQWNVDSNAVECVSICKGHERGVDSISVSPDATRFATGSWDTMLKVWSAAEDDAGGDAASSKRPKENGVRTPIMTLQGHRESISAVQWIDTSTLLTTSWDHTMKIWDLSLEGIKTEISTNKSIFDASYSNLNRLIVTASADKNLRLYDPRTNQGSIVRNTYLGHNAWVQTVMWSTTEEFLFVSGAYDNQNKLWDCRSPKAPLYDLLGHGEKVLDIDWSNPKYICSGGADNTVRVFKSRKAGVETMDDK</sequence>
<accession>B4MU54</accession>
<evidence type="ECO:0000255" key="1">
    <source>
        <dbReference type="HAMAP-Rule" id="MF_03029"/>
    </source>
</evidence>
<proteinExistence type="inferred from homology"/>